<comment type="function">
    <text evidence="1">Non-essential, abundant cell division factor that is required for proper Z-ring formation. It is recruited early to the divisome by direct interaction with FtsZ, stimulating Z-ring assembly and thereby promoting cell division earlier in the cell cycle. Its recruitment to the Z-ring requires functional FtsA or ZipA.</text>
</comment>
<comment type="subunit">
    <text evidence="1">Homodimer. The ends of the coiled-coil dimer bind to each other, forming polymers. Interacts with FtsZ.</text>
</comment>
<comment type="subcellular location">
    <subcellularLocation>
        <location evidence="1">Cytoplasm</location>
    </subcellularLocation>
    <text evidence="1">Localizes to the septum at mid-cell, in a FtsZ-like pattern.</text>
</comment>
<comment type="similarity">
    <text evidence="1">Belongs to the ZapB family.</text>
</comment>
<organism>
    <name type="scientific">Proteus mirabilis (strain HI4320)</name>
    <dbReference type="NCBI Taxonomy" id="529507"/>
    <lineage>
        <taxon>Bacteria</taxon>
        <taxon>Pseudomonadati</taxon>
        <taxon>Pseudomonadota</taxon>
        <taxon>Gammaproteobacteria</taxon>
        <taxon>Enterobacterales</taxon>
        <taxon>Morganellaceae</taxon>
        <taxon>Proteus</taxon>
    </lineage>
</organism>
<accession>B4F168</accession>
<sequence>MSFEVFEKLESKVQQALDTITLLQMEIEELKEKNDALNQEVQGARESREALVRENEELKQEQSSWQERLRALLGKMEDVQ</sequence>
<reference key="1">
    <citation type="journal article" date="2008" name="J. Bacteriol.">
        <title>Complete genome sequence of uropathogenic Proteus mirabilis, a master of both adherence and motility.</title>
        <authorList>
            <person name="Pearson M.M."/>
            <person name="Sebaihia M."/>
            <person name="Churcher C."/>
            <person name="Quail M.A."/>
            <person name="Seshasayee A.S."/>
            <person name="Luscombe N.M."/>
            <person name="Abdellah Z."/>
            <person name="Arrosmith C."/>
            <person name="Atkin B."/>
            <person name="Chillingworth T."/>
            <person name="Hauser H."/>
            <person name="Jagels K."/>
            <person name="Moule S."/>
            <person name="Mungall K."/>
            <person name="Norbertczak H."/>
            <person name="Rabbinowitsch E."/>
            <person name="Walker D."/>
            <person name="Whithead S."/>
            <person name="Thomson N.R."/>
            <person name="Rather P.N."/>
            <person name="Parkhill J."/>
            <person name="Mobley H.L.T."/>
        </authorList>
    </citation>
    <scope>NUCLEOTIDE SEQUENCE [LARGE SCALE GENOMIC DNA]</scope>
    <source>
        <strain>HI4320</strain>
    </source>
</reference>
<feature type="chain" id="PRO_1000138442" description="Cell division protein ZapB">
    <location>
        <begin position="1"/>
        <end position="80"/>
    </location>
</feature>
<feature type="coiled-coil region" evidence="1">
    <location>
        <begin position="3"/>
        <end position="80"/>
    </location>
</feature>
<keyword id="KW-0131">Cell cycle</keyword>
<keyword id="KW-0132">Cell division</keyword>
<keyword id="KW-0175">Coiled coil</keyword>
<keyword id="KW-0963">Cytoplasm</keyword>
<keyword id="KW-1185">Reference proteome</keyword>
<keyword id="KW-0717">Septation</keyword>
<name>ZAPB_PROMH</name>
<evidence type="ECO:0000255" key="1">
    <source>
        <dbReference type="HAMAP-Rule" id="MF_01196"/>
    </source>
</evidence>
<protein>
    <recommendedName>
        <fullName evidence="1">Cell division protein ZapB</fullName>
    </recommendedName>
</protein>
<dbReference type="EMBL" id="AM942759">
    <property type="protein sequence ID" value="CAR46295.1"/>
    <property type="molecule type" value="Genomic_DNA"/>
</dbReference>
<dbReference type="RefSeq" id="WP_012368679.1">
    <property type="nucleotide sequence ID" value="NC_010554.1"/>
</dbReference>
<dbReference type="SMR" id="B4F168"/>
<dbReference type="EnsemblBacteria" id="CAR46295">
    <property type="protein sequence ID" value="CAR46295"/>
    <property type="gene ID" value="PMI3212"/>
</dbReference>
<dbReference type="GeneID" id="6801875"/>
<dbReference type="KEGG" id="pmr:PMI3212"/>
<dbReference type="eggNOG" id="COG3074">
    <property type="taxonomic scope" value="Bacteria"/>
</dbReference>
<dbReference type="HOGENOM" id="CLU_171174_2_0_6"/>
<dbReference type="Proteomes" id="UP000008319">
    <property type="component" value="Chromosome"/>
</dbReference>
<dbReference type="GO" id="GO:0005737">
    <property type="term" value="C:cytoplasm"/>
    <property type="evidence" value="ECO:0007669"/>
    <property type="project" value="UniProtKB-SubCell"/>
</dbReference>
<dbReference type="GO" id="GO:0000917">
    <property type="term" value="P:division septum assembly"/>
    <property type="evidence" value="ECO:0007669"/>
    <property type="project" value="UniProtKB-KW"/>
</dbReference>
<dbReference type="GO" id="GO:0043093">
    <property type="term" value="P:FtsZ-dependent cytokinesis"/>
    <property type="evidence" value="ECO:0007669"/>
    <property type="project" value="UniProtKB-UniRule"/>
</dbReference>
<dbReference type="Gene3D" id="1.20.5.340">
    <property type="match status" value="1"/>
</dbReference>
<dbReference type="HAMAP" id="MF_01196">
    <property type="entry name" value="ZapB"/>
    <property type="match status" value="1"/>
</dbReference>
<dbReference type="InterPro" id="IPR009252">
    <property type="entry name" value="Cell_div_ZapB"/>
</dbReference>
<dbReference type="Pfam" id="PF06005">
    <property type="entry name" value="ZapB"/>
    <property type="match status" value="1"/>
</dbReference>
<proteinExistence type="inferred from homology"/>
<gene>
    <name evidence="1" type="primary">zapB</name>
    <name type="ordered locus">PMI3212</name>
</gene>